<sequence length="416" mass="45821">MPEKSLYEMAVEQFNRAASLMDLESDLAEVLRRPKRVLIVEFPVRMDDGHVEVFTGYRVQHNVARGPAKGGIRYHPDVTLDEVKALAFWMTWKTAVMNLPFGGGKGGVRVDPKKLSRNELERLSRRFFSEIQVIIGPYNDIPAPDVNTNADVMAWYMDTYSMNVGHTVLGIVTGKPVELGGSKGREEATGRGVKVCAGLAMDVLGIDPKKATVAVQGFGNVGQFAALLISQELGSKVVAVSDSRGGIYNPEGFDVEELIRYKKEHGTVVTYPKGERITNEELLELDVDILVPAALEGAIHAGNAERIKAKAVVEGANGPTTPEADEILSRRGILVVPDILANAGGVTVSYFEWVQDLQSFFWDLDQVRNALEKMMKGAFNDVMKVKEKYNVDMRTAAYILAIDRVAYATKKRGIYP</sequence>
<keyword id="KW-0002">3D-structure</keyword>
<keyword id="KW-0903">Direct protein sequencing</keyword>
<keyword id="KW-0520">NAD</keyword>
<keyword id="KW-0521">NADP</keyword>
<keyword id="KW-0560">Oxidoreductase</keyword>
<keyword id="KW-1185">Reference proteome</keyword>
<evidence type="ECO:0000255" key="1">
    <source>
        <dbReference type="PROSITE-ProRule" id="PRU10011"/>
    </source>
</evidence>
<evidence type="ECO:0000269" key="2">
    <source>
    </source>
</evidence>
<evidence type="ECO:0000305" key="3"/>
<evidence type="ECO:0007829" key="4">
    <source>
        <dbReference type="PDB" id="1B26"/>
    </source>
</evidence>
<evidence type="ECO:0007829" key="5">
    <source>
        <dbReference type="PDB" id="1B3B"/>
    </source>
</evidence>
<evidence type="ECO:0007829" key="6">
    <source>
        <dbReference type="PDB" id="2TMG"/>
    </source>
</evidence>
<proteinExistence type="evidence at protein level"/>
<gene>
    <name type="primary">gdhA</name>
    <name type="synonym">gdh</name>
    <name type="ordered locus">TM_1015</name>
</gene>
<reference key="1">
    <citation type="journal article" date="1997" name="Extremophiles">
        <title>Glutamate dehydrogenase from the hyperthermophilic bacterium Thermotoga maritima: molecular characterization and phylogenetic implications.</title>
        <authorList>
            <person name="Kort R."/>
            <person name="Liebl W."/>
            <person name="Labedan B."/>
            <person name="Forterre P."/>
            <person name="Eggen R.I.L."/>
            <person name="de Vos W.M."/>
        </authorList>
    </citation>
    <scope>NUCLEOTIDE SEQUENCE [GENOMIC DNA]</scope>
    <scope>PROTEIN SEQUENCE OF 2-13</scope>
    <scope>CHARACTERIZATION</scope>
    <source>
        <strain>ATCC 43589 / DSM 3109 / JCM 10099 / NBRC 100826 / MSB8</strain>
    </source>
</reference>
<reference key="2">
    <citation type="journal article" date="1999" name="Nature">
        <title>Evidence for lateral gene transfer between Archaea and Bacteria from genome sequence of Thermotoga maritima.</title>
        <authorList>
            <person name="Nelson K.E."/>
            <person name="Clayton R.A."/>
            <person name="Gill S.R."/>
            <person name="Gwinn M.L."/>
            <person name="Dodson R.J."/>
            <person name="Haft D.H."/>
            <person name="Hickey E.K."/>
            <person name="Peterson J.D."/>
            <person name="Nelson W.C."/>
            <person name="Ketchum K.A."/>
            <person name="McDonald L.A."/>
            <person name="Utterback T.R."/>
            <person name="Malek J.A."/>
            <person name="Linher K.D."/>
            <person name="Garrett M.M."/>
            <person name="Stewart A.M."/>
            <person name="Cotton M.D."/>
            <person name="Pratt M.S."/>
            <person name="Phillips C.A."/>
            <person name="Richardson D.L."/>
            <person name="Heidelberg J.F."/>
            <person name="Sutton G.G."/>
            <person name="Fleischmann R.D."/>
            <person name="Eisen J.A."/>
            <person name="White O."/>
            <person name="Salzberg S.L."/>
            <person name="Smith H.O."/>
            <person name="Venter J.C."/>
            <person name="Fraser C.M."/>
        </authorList>
    </citation>
    <scope>NUCLEOTIDE SEQUENCE [LARGE SCALE GENOMIC DNA]</scope>
    <source>
        <strain>ATCC 43589 / DSM 3109 / JCM 10099 / NBRC 100826 / MSB8</strain>
    </source>
</reference>
<reference key="3">
    <citation type="journal article" date="1997" name="J. Mol. Biol.">
        <title>Crystal structure of glutamate dehydrogenase from the hyperthermophilic eubacterium Thermotoga maritima at 3.0-A resolution.</title>
        <authorList>
            <person name="Knapp S."/>
            <person name="de Vos W.M."/>
            <person name="Rice D."/>
            <person name="Ladenstein R."/>
        </authorList>
    </citation>
    <scope>X-RAY CRYSTALLOGRAPHY (3.0 ANGSTROMS)</scope>
</reference>
<reference key="4">
    <citation type="journal article" date="1998" name="J. Mol. Biol.">
        <title>Engineering activity and stability of Thermotoga maritima glutamate dehydrogenase. I. Introduction of a six-residue ion-pair network in the hinge region.</title>
        <authorList>
            <person name="Lebbink J.H."/>
            <person name="Knapp S."/>
            <person name="van der Oost J."/>
            <person name="Rice D."/>
            <person name="Ladenstein R."/>
            <person name="de Vos W.M."/>
        </authorList>
    </citation>
    <scope>X-RAY CRYSTALLOGRAPHY (3.1 ANGSTROMS)</scope>
</reference>
<reference key="5">
    <citation type="journal article" date="1999" name="J. Mol. Biol.">
        <title>Engineering activity and stability of Thermotoga maritima glutamate dehydrogenase. II: construction of a 16-residue ion-pair network at the subunit interface.</title>
        <authorList>
            <person name="Lebbink J.H."/>
            <person name="Knapp S."/>
            <person name="van der Oost J."/>
            <person name="Rice D."/>
            <person name="Ladenstein R."/>
            <person name="de Vos W.M."/>
        </authorList>
    </citation>
    <scope>X-RAY CRYSTALLOGRAPHY (2.9 ANGSTROMS)</scope>
</reference>
<accession>P96110</accession>
<comment type="catalytic activity">
    <reaction evidence="1">
        <text>L-glutamate + NAD(+) + H2O = 2-oxoglutarate + NH4(+) + NADH + H(+)</text>
        <dbReference type="Rhea" id="RHEA:15133"/>
        <dbReference type="ChEBI" id="CHEBI:15377"/>
        <dbReference type="ChEBI" id="CHEBI:15378"/>
        <dbReference type="ChEBI" id="CHEBI:16810"/>
        <dbReference type="ChEBI" id="CHEBI:28938"/>
        <dbReference type="ChEBI" id="CHEBI:29985"/>
        <dbReference type="ChEBI" id="CHEBI:57540"/>
        <dbReference type="ChEBI" id="CHEBI:57945"/>
        <dbReference type="EC" id="1.4.1.3"/>
    </reaction>
</comment>
<comment type="catalytic activity">
    <reaction evidence="1">
        <text>L-glutamate + NADP(+) + H2O = 2-oxoglutarate + NH4(+) + NADPH + H(+)</text>
        <dbReference type="Rhea" id="RHEA:11612"/>
        <dbReference type="ChEBI" id="CHEBI:15377"/>
        <dbReference type="ChEBI" id="CHEBI:15378"/>
        <dbReference type="ChEBI" id="CHEBI:16810"/>
        <dbReference type="ChEBI" id="CHEBI:28938"/>
        <dbReference type="ChEBI" id="CHEBI:29985"/>
        <dbReference type="ChEBI" id="CHEBI:57783"/>
        <dbReference type="ChEBI" id="CHEBI:58349"/>
        <dbReference type="EC" id="1.4.1.3"/>
    </reaction>
</comment>
<comment type="biophysicochemical properties">
    <temperatureDependence>
        <text>Optimum temperature is 75 degrees Celsius. Thermostable.</text>
    </temperatureDependence>
</comment>
<comment type="subunit">
    <text>Homohexamer.</text>
</comment>
<comment type="similarity">
    <text evidence="3">Belongs to the Glu/Leu/Phe/Val dehydrogenases family.</text>
</comment>
<feature type="initiator methionine" description="Removed" evidence="2">
    <location>
        <position position="1"/>
    </location>
</feature>
<feature type="chain" id="PRO_0000182764" description="Glutamate dehydrogenase">
    <location>
        <begin position="2"/>
        <end position="416"/>
    </location>
</feature>
<feature type="active site">
    <location>
        <position position="105"/>
    </location>
</feature>
<feature type="sequence conflict" description="In Ref. 1; CAA71058." evidence="3" ref="1">
    <original>M</original>
    <variation>I</variation>
    <location>
        <position position="153"/>
    </location>
</feature>
<feature type="helix" evidence="6">
    <location>
        <begin position="6"/>
        <end position="20"/>
    </location>
</feature>
<feature type="helix" evidence="6">
    <location>
        <begin position="25"/>
        <end position="32"/>
    </location>
</feature>
<feature type="strand" evidence="6">
    <location>
        <begin position="35"/>
        <end position="45"/>
    </location>
</feature>
<feature type="strand" evidence="6">
    <location>
        <begin position="51"/>
        <end position="62"/>
    </location>
</feature>
<feature type="strand" evidence="6">
    <location>
        <begin position="66"/>
        <end position="69"/>
    </location>
</feature>
<feature type="strand" evidence="6">
    <location>
        <begin position="72"/>
        <end position="77"/>
    </location>
</feature>
<feature type="helix" evidence="6">
    <location>
        <begin position="80"/>
        <end position="97"/>
    </location>
</feature>
<feature type="strand" evidence="6">
    <location>
        <begin position="103"/>
        <end position="109"/>
    </location>
</feature>
<feature type="helix" evidence="6">
    <location>
        <begin position="112"/>
        <end position="114"/>
    </location>
</feature>
<feature type="helix" evidence="6">
    <location>
        <begin position="117"/>
        <end position="130"/>
    </location>
</feature>
<feature type="helix" evidence="6">
    <location>
        <begin position="132"/>
        <end position="134"/>
    </location>
</feature>
<feature type="turn" evidence="6">
    <location>
        <begin position="137"/>
        <end position="139"/>
    </location>
</feature>
<feature type="strand" evidence="4">
    <location>
        <begin position="140"/>
        <end position="143"/>
    </location>
</feature>
<feature type="helix" evidence="6">
    <location>
        <begin position="150"/>
        <end position="164"/>
    </location>
</feature>
<feature type="strand" evidence="5">
    <location>
        <begin position="171"/>
        <end position="174"/>
    </location>
</feature>
<feature type="helix" evidence="6">
    <location>
        <begin position="177"/>
        <end position="179"/>
    </location>
</feature>
<feature type="turn" evidence="6">
    <location>
        <begin position="183"/>
        <end position="187"/>
    </location>
</feature>
<feature type="helix" evidence="6">
    <location>
        <begin position="188"/>
        <end position="203"/>
    </location>
</feature>
<feature type="turn" evidence="6">
    <location>
        <begin position="208"/>
        <end position="210"/>
    </location>
</feature>
<feature type="strand" evidence="6">
    <location>
        <begin position="212"/>
        <end position="216"/>
    </location>
</feature>
<feature type="helix" evidence="6">
    <location>
        <begin position="220"/>
        <end position="231"/>
    </location>
</feature>
<feature type="strand" evidence="6">
    <location>
        <begin position="236"/>
        <end position="241"/>
    </location>
</feature>
<feature type="strand" evidence="6">
    <location>
        <begin position="246"/>
        <end position="248"/>
    </location>
</feature>
<feature type="helix" evidence="6">
    <location>
        <begin position="255"/>
        <end position="264"/>
    </location>
</feature>
<feature type="strand" evidence="5">
    <location>
        <begin position="265"/>
        <end position="268"/>
    </location>
</feature>
<feature type="strand" evidence="6">
    <location>
        <begin position="272"/>
        <end position="277"/>
    </location>
</feature>
<feature type="helix" evidence="6">
    <location>
        <begin position="279"/>
        <end position="282"/>
    </location>
</feature>
<feature type="strand" evidence="6">
    <location>
        <begin position="288"/>
        <end position="292"/>
    </location>
</feature>
<feature type="helix" evidence="6">
    <location>
        <begin position="301"/>
        <end position="304"/>
    </location>
</feature>
<feature type="strand" evidence="6">
    <location>
        <begin position="310"/>
        <end position="313"/>
    </location>
</feature>
<feature type="strand" evidence="6">
    <location>
        <begin position="316"/>
        <end position="318"/>
    </location>
</feature>
<feature type="helix" evidence="6">
    <location>
        <begin position="322"/>
        <end position="330"/>
    </location>
</feature>
<feature type="strand" evidence="6">
    <location>
        <begin position="334"/>
        <end position="336"/>
    </location>
</feature>
<feature type="helix" evidence="6">
    <location>
        <begin position="338"/>
        <end position="341"/>
    </location>
</feature>
<feature type="helix" evidence="6">
    <location>
        <begin position="344"/>
        <end position="357"/>
    </location>
</feature>
<feature type="helix" evidence="6">
    <location>
        <begin position="364"/>
        <end position="389"/>
    </location>
</feature>
<feature type="helix" evidence="6">
    <location>
        <begin position="393"/>
        <end position="411"/>
    </location>
</feature>
<dbReference type="EC" id="1.4.1.3"/>
<dbReference type="EMBL" id="Y09925">
    <property type="protein sequence ID" value="CAA71058.1"/>
    <property type="molecule type" value="Genomic_DNA"/>
</dbReference>
<dbReference type="EMBL" id="AE000512">
    <property type="protein sequence ID" value="AAD36092.1"/>
    <property type="molecule type" value="Genomic_DNA"/>
</dbReference>
<dbReference type="PIR" id="G72305">
    <property type="entry name" value="G72305"/>
</dbReference>
<dbReference type="PIR" id="T45284">
    <property type="entry name" value="T45284"/>
</dbReference>
<dbReference type="RefSeq" id="NP_228821.1">
    <property type="nucleotide sequence ID" value="NC_000853.1"/>
</dbReference>
<dbReference type="RefSeq" id="WP_004080520.1">
    <property type="nucleotide sequence ID" value="NZ_CP011107.1"/>
</dbReference>
<dbReference type="PDB" id="1B26">
    <property type="method" value="X-ray"/>
    <property type="resolution" value="3.00 A"/>
    <property type="chains" value="A/B/C/D/E/F=1-416"/>
</dbReference>
<dbReference type="PDB" id="1B3B">
    <property type="method" value="X-ray"/>
    <property type="resolution" value="3.10 A"/>
    <property type="chains" value="A/B/C/D/E/F=2-416"/>
</dbReference>
<dbReference type="PDB" id="2TMG">
    <property type="method" value="X-ray"/>
    <property type="resolution" value="2.90 A"/>
    <property type="chains" value="A/B/C/D/E/F=2-416"/>
</dbReference>
<dbReference type="PDBsum" id="1B26"/>
<dbReference type="PDBsum" id="1B3B"/>
<dbReference type="PDBsum" id="2TMG"/>
<dbReference type="SMR" id="P96110"/>
<dbReference type="FunCoup" id="P96110">
    <property type="interactions" value="266"/>
</dbReference>
<dbReference type="STRING" id="243274.TM_1015"/>
<dbReference type="PaxDb" id="243274-THEMA_09280"/>
<dbReference type="EnsemblBacteria" id="AAD36092">
    <property type="protein sequence ID" value="AAD36092"/>
    <property type="gene ID" value="TM_1015"/>
</dbReference>
<dbReference type="KEGG" id="tma:TM1015"/>
<dbReference type="KEGG" id="tmi:THEMA_09280"/>
<dbReference type="KEGG" id="tmm:Tmari_1018"/>
<dbReference type="KEGG" id="tmw:THMA_1037"/>
<dbReference type="eggNOG" id="COG0334">
    <property type="taxonomic scope" value="Bacteria"/>
</dbReference>
<dbReference type="InParanoid" id="P96110"/>
<dbReference type="OrthoDB" id="9803297at2"/>
<dbReference type="BRENDA" id="1.4.1.3">
    <property type="organism ID" value="6331"/>
</dbReference>
<dbReference type="EvolutionaryTrace" id="P96110"/>
<dbReference type="Proteomes" id="UP000008183">
    <property type="component" value="Chromosome"/>
</dbReference>
<dbReference type="GO" id="GO:0004352">
    <property type="term" value="F:glutamate dehydrogenase (NAD+) activity"/>
    <property type="evidence" value="ECO:0000318"/>
    <property type="project" value="GO_Central"/>
</dbReference>
<dbReference type="GO" id="GO:0004354">
    <property type="term" value="F:glutamate dehydrogenase (NADP+) activity"/>
    <property type="evidence" value="ECO:0007669"/>
    <property type="project" value="RHEA"/>
</dbReference>
<dbReference type="GO" id="GO:0006538">
    <property type="term" value="P:glutamate catabolic process"/>
    <property type="evidence" value="ECO:0000318"/>
    <property type="project" value="GO_Central"/>
</dbReference>
<dbReference type="CDD" id="cd01076">
    <property type="entry name" value="NAD_bind_1_Glu_DH"/>
    <property type="match status" value="1"/>
</dbReference>
<dbReference type="FunFam" id="3.40.50.10860:FF:000003">
    <property type="entry name" value="Glutamate dehydrogenase"/>
    <property type="match status" value="1"/>
</dbReference>
<dbReference type="Gene3D" id="3.40.50.10860">
    <property type="entry name" value="Leucine Dehydrogenase, chain A, domain 1"/>
    <property type="match status" value="1"/>
</dbReference>
<dbReference type="Gene3D" id="3.40.50.720">
    <property type="entry name" value="NAD(P)-binding Rossmann-like Domain"/>
    <property type="match status" value="1"/>
</dbReference>
<dbReference type="InterPro" id="IPR046346">
    <property type="entry name" value="Aminoacid_DH-like_N_sf"/>
</dbReference>
<dbReference type="InterPro" id="IPR053388">
    <property type="entry name" value="GLPV_dehydrogenases"/>
</dbReference>
<dbReference type="InterPro" id="IPR006095">
    <property type="entry name" value="Glu/Leu/Phe/Val/Trp_DH"/>
</dbReference>
<dbReference type="InterPro" id="IPR006096">
    <property type="entry name" value="Glu/Leu/Phe/Val/Trp_DH_C"/>
</dbReference>
<dbReference type="InterPro" id="IPR006097">
    <property type="entry name" value="Glu/Leu/Phe/Val/Trp_DH_dimer"/>
</dbReference>
<dbReference type="InterPro" id="IPR033524">
    <property type="entry name" value="Glu/Leu/Phe/Val_DH_AS"/>
</dbReference>
<dbReference type="InterPro" id="IPR014362">
    <property type="entry name" value="Glu_DH"/>
</dbReference>
<dbReference type="InterPro" id="IPR036291">
    <property type="entry name" value="NAD(P)-bd_dom_sf"/>
</dbReference>
<dbReference type="InterPro" id="IPR033922">
    <property type="entry name" value="NAD_bind_Glu_DH"/>
</dbReference>
<dbReference type="NCBIfam" id="NF040817">
    <property type="entry name" value="GdhA_Arch"/>
    <property type="match status" value="1"/>
</dbReference>
<dbReference type="PANTHER" id="PTHR11606">
    <property type="entry name" value="GLUTAMATE DEHYDROGENASE"/>
    <property type="match status" value="1"/>
</dbReference>
<dbReference type="PANTHER" id="PTHR11606:SF13">
    <property type="entry name" value="GLUTAMATE DEHYDROGENASE 1, MITOCHONDRIAL"/>
    <property type="match status" value="1"/>
</dbReference>
<dbReference type="Pfam" id="PF00208">
    <property type="entry name" value="ELFV_dehydrog"/>
    <property type="match status" value="1"/>
</dbReference>
<dbReference type="Pfam" id="PF02812">
    <property type="entry name" value="ELFV_dehydrog_N"/>
    <property type="match status" value="1"/>
</dbReference>
<dbReference type="PIRSF" id="PIRSF000185">
    <property type="entry name" value="Glu_DH"/>
    <property type="match status" value="1"/>
</dbReference>
<dbReference type="PRINTS" id="PR00082">
    <property type="entry name" value="GLFDHDRGNASE"/>
</dbReference>
<dbReference type="SMART" id="SM00839">
    <property type="entry name" value="ELFV_dehydrog"/>
    <property type="match status" value="1"/>
</dbReference>
<dbReference type="SUPFAM" id="SSF53223">
    <property type="entry name" value="Aminoacid dehydrogenase-like, N-terminal domain"/>
    <property type="match status" value="1"/>
</dbReference>
<dbReference type="SUPFAM" id="SSF51735">
    <property type="entry name" value="NAD(P)-binding Rossmann-fold domains"/>
    <property type="match status" value="1"/>
</dbReference>
<dbReference type="PROSITE" id="PS00074">
    <property type="entry name" value="GLFV_DEHYDROGENASE"/>
    <property type="match status" value="1"/>
</dbReference>
<organism>
    <name type="scientific">Thermotoga maritima (strain ATCC 43589 / DSM 3109 / JCM 10099 / NBRC 100826 / MSB8)</name>
    <dbReference type="NCBI Taxonomy" id="243274"/>
    <lineage>
        <taxon>Bacteria</taxon>
        <taxon>Thermotogati</taxon>
        <taxon>Thermotogota</taxon>
        <taxon>Thermotogae</taxon>
        <taxon>Thermotogales</taxon>
        <taxon>Thermotogaceae</taxon>
        <taxon>Thermotoga</taxon>
    </lineage>
</organism>
<protein>
    <recommendedName>
        <fullName>Glutamate dehydrogenase</fullName>
        <shortName>GDH</shortName>
        <ecNumber>1.4.1.3</ecNumber>
    </recommendedName>
</protein>
<name>DHE3_THEMA</name>